<accession>A6UTF6</accession>
<name>TBP_META3</name>
<evidence type="ECO:0000255" key="1">
    <source>
        <dbReference type="HAMAP-Rule" id="MF_00408"/>
    </source>
</evidence>
<proteinExistence type="inferred from homology"/>
<comment type="function">
    <text evidence="1">General factor that plays a role in the activation of archaeal genes transcribed by RNA polymerase. Binds specifically to the TATA box promoter element which lies close to the position of transcription initiation.</text>
</comment>
<comment type="similarity">
    <text evidence="1">Belongs to the TBP family.</text>
</comment>
<dbReference type="EMBL" id="CP000743">
    <property type="protein sequence ID" value="ABR55778.1"/>
    <property type="molecule type" value="Genomic_DNA"/>
</dbReference>
<dbReference type="RefSeq" id="WP_011972910.1">
    <property type="nucleotide sequence ID" value="NC_009635.1"/>
</dbReference>
<dbReference type="SMR" id="A6UTF6"/>
<dbReference type="STRING" id="419665.Maeo_0186"/>
<dbReference type="GeneID" id="5327035"/>
<dbReference type="KEGG" id="mae:Maeo_0186"/>
<dbReference type="eggNOG" id="arCOG01764">
    <property type="taxonomic scope" value="Archaea"/>
</dbReference>
<dbReference type="HOGENOM" id="CLU_060161_4_3_2"/>
<dbReference type="OrthoDB" id="350539at2157"/>
<dbReference type="Proteomes" id="UP000001106">
    <property type="component" value="Chromosome"/>
</dbReference>
<dbReference type="GO" id="GO:0003677">
    <property type="term" value="F:DNA binding"/>
    <property type="evidence" value="ECO:0007669"/>
    <property type="project" value="UniProtKB-KW"/>
</dbReference>
<dbReference type="GO" id="GO:0003700">
    <property type="term" value="F:DNA-binding transcription factor activity"/>
    <property type="evidence" value="ECO:0007669"/>
    <property type="project" value="UniProtKB-UniRule"/>
</dbReference>
<dbReference type="GO" id="GO:0006352">
    <property type="term" value="P:DNA-templated transcription initiation"/>
    <property type="evidence" value="ECO:0007669"/>
    <property type="project" value="InterPro"/>
</dbReference>
<dbReference type="CDD" id="cd04518">
    <property type="entry name" value="TBP_archaea"/>
    <property type="match status" value="1"/>
</dbReference>
<dbReference type="FunFam" id="3.30.310.10:FF:000007">
    <property type="entry name" value="TATA-box-binding protein"/>
    <property type="match status" value="1"/>
</dbReference>
<dbReference type="FunFam" id="3.30.310.10:FF:000010">
    <property type="entry name" value="TATA-box-binding protein"/>
    <property type="match status" value="1"/>
</dbReference>
<dbReference type="Gene3D" id="3.30.310.10">
    <property type="entry name" value="TATA-Binding Protein"/>
    <property type="match status" value="2"/>
</dbReference>
<dbReference type="HAMAP" id="MF_00408">
    <property type="entry name" value="TATA_bind_prot_arch"/>
    <property type="match status" value="1"/>
</dbReference>
<dbReference type="InterPro" id="IPR000814">
    <property type="entry name" value="TBP"/>
</dbReference>
<dbReference type="InterPro" id="IPR033711">
    <property type="entry name" value="TBP_archaea"/>
</dbReference>
<dbReference type="InterPro" id="IPR030491">
    <property type="entry name" value="TBP_CS"/>
</dbReference>
<dbReference type="InterPro" id="IPR012295">
    <property type="entry name" value="TBP_dom_sf"/>
</dbReference>
<dbReference type="NCBIfam" id="NF001593">
    <property type="entry name" value="PRK00394.1-2"/>
    <property type="match status" value="1"/>
</dbReference>
<dbReference type="NCBIfam" id="NF001594">
    <property type="entry name" value="PRK00394.1-3"/>
    <property type="match status" value="1"/>
</dbReference>
<dbReference type="PANTHER" id="PTHR10126">
    <property type="entry name" value="TATA-BOX BINDING PROTEIN"/>
    <property type="match status" value="1"/>
</dbReference>
<dbReference type="Pfam" id="PF00352">
    <property type="entry name" value="TBP"/>
    <property type="match status" value="2"/>
</dbReference>
<dbReference type="PRINTS" id="PR00686">
    <property type="entry name" value="TIFACTORIID"/>
</dbReference>
<dbReference type="SUPFAM" id="SSF55945">
    <property type="entry name" value="TATA-box binding protein-like"/>
    <property type="match status" value="2"/>
</dbReference>
<dbReference type="PROSITE" id="PS00351">
    <property type="entry name" value="TFIID"/>
    <property type="match status" value="2"/>
</dbReference>
<gene>
    <name evidence="1" type="primary">tbp</name>
    <name type="ordered locus">Maeo_0186</name>
</gene>
<organism>
    <name type="scientific">Methanococcus aeolicus (strain ATCC BAA-1280 / DSM 17508 / OCM 812 / Nankai-3)</name>
    <dbReference type="NCBI Taxonomy" id="419665"/>
    <lineage>
        <taxon>Archaea</taxon>
        <taxon>Methanobacteriati</taxon>
        <taxon>Methanobacteriota</taxon>
        <taxon>Methanomada group</taxon>
        <taxon>Methanococci</taxon>
        <taxon>Methanococcales</taxon>
        <taxon>Methanococcaceae</taxon>
        <taxon>Methanococcus</taxon>
    </lineage>
</organism>
<sequence>MSSEIKIVNVVVSTKIGDDIDLEYVADVLDNSEYEPEQFPGLVCRLSDPKVALLIFRSGKLNCTGAKSKEDAVIAINKVMEYLREAGLDLIDTPEVKVQNMVATAELGMEPNLDDLSTLERTEYEPEQFPGLVYRMESPKVVLLVFGSGKVVITGLKNKEDAYIALEKIKNTVKELEEEYF</sequence>
<protein>
    <recommendedName>
        <fullName evidence="1">TATA-box-binding protein</fullName>
    </recommendedName>
    <alternativeName>
        <fullName evidence="1">Box A-binding protein</fullName>
        <shortName evidence="1">BAP</shortName>
    </alternativeName>
    <alternativeName>
        <fullName evidence="1">TATA sequence-binding protein</fullName>
        <shortName evidence="1">TBP</shortName>
    </alternativeName>
    <alternativeName>
        <fullName evidence="1">TATA-box factor</fullName>
    </alternativeName>
</protein>
<reference key="1">
    <citation type="submission" date="2007-06" db="EMBL/GenBank/DDBJ databases">
        <title>Complete sequence of Methanococcus aeolicus Nankai-3.</title>
        <authorList>
            <consortium name="US DOE Joint Genome Institute"/>
            <person name="Copeland A."/>
            <person name="Lucas S."/>
            <person name="Lapidus A."/>
            <person name="Barry K."/>
            <person name="Glavina del Rio T."/>
            <person name="Dalin E."/>
            <person name="Tice H."/>
            <person name="Pitluck S."/>
            <person name="Chain P."/>
            <person name="Malfatti S."/>
            <person name="Shin M."/>
            <person name="Vergez L."/>
            <person name="Schmutz J."/>
            <person name="Larimer F."/>
            <person name="Land M."/>
            <person name="Hauser L."/>
            <person name="Kyrpides N."/>
            <person name="Lykidis A."/>
            <person name="Sieprawska-Lupa M."/>
            <person name="Whitman W.B."/>
            <person name="Richardson P."/>
        </authorList>
    </citation>
    <scope>NUCLEOTIDE SEQUENCE [LARGE SCALE GENOMIC DNA]</scope>
    <source>
        <strain>ATCC BAA-1280 / DSM 17508 / OCM 812 / Nankai-3</strain>
    </source>
</reference>
<keyword id="KW-0238">DNA-binding</keyword>
<keyword id="KW-0677">Repeat</keyword>
<keyword id="KW-0804">Transcription</keyword>
<keyword id="KW-0805">Transcription regulation</keyword>
<feature type="chain" id="PRO_1000049879" description="TATA-box-binding protein">
    <location>
        <begin position="1"/>
        <end position="181"/>
    </location>
</feature>
<feature type="repeat" description="1">
    <location>
        <begin position="7"/>
        <end position="83"/>
    </location>
</feature>
<feature type="repeat" description="2">
    <location>
        <begin position="98"/>
        <end position="173"/>
    </location>
</feature>